<comment type="function">
    <text evidence="1">Catalyzes the oxidation of 5,10-methylenetetrahydrofolate to 5,10-methenyltetrahydrofolate and then the hydrolysis of 5,10-methenyltetrahydrofolate to 10-formyltetrahydrofolate.</text>
</comment>
<comment type="catalytic activity">
    <reaction evidence="1">
        <text>(6R)-5,10-methylene-5,6,7,8-tetrahydrofolate + NADP(+) = (6R)-5,10-methenyltetrahydrofolate + NADPH</text>
        <dbReference type="Rhea" id="RHEA:22812"/>
        <dbReference type="ChEBI" id="CHEBI:15636"/>
        <dbReference type="ChEBI" id="CHEBI:57455"/>
        <dbReference type="ChEBI" id="CHEBI:57783"/>
        <dbReference type="ChEBI" id="CHEBI:58349"/>
        <dbReference type="EC" id="1.5.1.5"/>
    </reaction>
</comment>
<comment type="catalytic activity">
    <reaction evidence="1">
        <text>(6R)-5,10-methenyltetrahydrofolate + H2O = (6R)-10-formyltetrahydrofolate + H(+)</text>
        <dbReference type="Rhea" id="RHEA:23700"/>
        <dbReference type="ChEBI" id="CHEBI:15377"/>
        <dbReference type="ChEBI" id="CHEBI:15378"/>
        <dbReference type="ChEBI" id="CHEBI:57455"/>
        <dbReference type="ChEBI" id="CHEBI:195366"/>
        <dbReference type="EC" id="3.5.4.9"/>
    </reaction>
</comment>
<comment type="pathway">
    <text evidence="1">One-carbon metabolism; tetrahydrofolate interconversion.</text>
</comment>
<comment type="subunit">
    <text evidence="1">Homodimer.</text>
</comment>
<comment type="similarity">
    <text evidence="1">Belongs to the tetrahydrofolate dehydrogenase/cyclohydrolase family.</text>
</comment>
<name>FOLD_ANAPZ</name>
<keyword id="KW-0028">Amino-acid biosynthesis</keyword>
<keyword id="KW-0368">Histidine biosynthesis</keyword>
<keyword id="KW-0378">Hydrolase</keyword>
<keyword id="KW-0486">Methionine biosynthesis</keyword>
<keyword id="KW-0511">Multifunctional enzyme</keyword>
<keyword id="KW-0521">NADP</keyword>
<keyword id="KW-0554">One-carbon metabolism</keyword>
<keyword id="KW-0560">Oxidoreductase</keyword>
<keyword id="KW-0658">Purine biosynthesis</keyword>
<dbReference type="EC" id="1.5.1.5" evidence="1"/>
<dbReference type="EC" id="3.5.4.9" evidence="1"/>
<dbReference type="EMBL" id="CP000235">
    <property type="protein sequence ID" value="ABD43805.1"/>
    <property type="molecule type" value="Genomic_DNA"/>
</dbReference>
<dbReference type="RefSeq" id="WP_011450323.1">
    <property type="nucleotide sequence ID" value="NC_007797.1"/>
</dbReference>
<dbReference type="SMR" id="Q2GLF2"/>
<dbReference type="STRING" id="212042.APH_0175"/>
<dbReference type="PaxDb" id="212042-APH_0175"/>
<dbReference type="EnsemblBacteria" id="ABD43805">
    <property type="protein sequence ID" value="ABD43805"/>
    <property type="gene ID" value="APH_0175"/>
</dbReference>
<dbReference type="GeneID" id="92747599"/>
<dbReference type="KEGG" id="aph:APH_0175"/>
<dbReference type="eggNOG" id="COG0190">
    <property type="taxonomic scope" value="Bacteria"/>
</dbReference>
<dbReference type="HOGENOM" id="CLU_034045_1_2_5"/>
<dbReference type="UniPathway" id="UPA00193"/>
<dbReference type="Proteomes" id="UP000001943">
    <property type="component" value="Chromosome"/>
</dbReference>
<dbReference type="GO" id="GO:0005829">
    <property type="term" value="C:cytosol"/>
    <property type="evidence" value="ECO:0007669"/>
    <property type="project" value="TreeGrafter"/>
</dbReference>
<dbReference type="GO" id="GO:0004477">
    <property type="term" value="F:methenyltetrahydrofolate cyclohydrolase activity"/>
    <property type="evidence" value="ECO:0007669"/>
    <property type="project" value="UniProtKB-UniRule"/>
</dbReference>
<dbReference type="GO" id="GO:0004488">
    <property type="term" value="F:methylenetetrahydrofolate dehydrogenase (NADP+) activity"/>
    <property type="evidence" value="ECO:0007669"/>
    <property type="project" value="UniProtKB-UniRule"/>
</dbReference>
<dbReference type="GO" id="GO:0000105">
    <property type="term" value="P:L-histidine biosynthetic process"/>
    <property type="evidence" value="ECO:0007669"/>
    <property type="project" value="UniProtKB-KW"/>
</dbReference>
<dbReference type="GO" id="GO:0009086">
    <property type="term" value="P:methionine biosynthetic process"/>
    <property type="evidence" value="ECO:0007669"/>
    <property type="project" value="UniProtKB-KW"/>
</dbReference>
<dbReference type="GO" id="GO:0006164">
    <property type="term" value="P:purine nucleotide biosynthetic process"/>
    <property type="evidence" value="ECO:0007669"/>
    <property type="project" value="UniProtKB-KW"/>
</dbReference>
<dbReference type="GO" id="GO:0035999">
    <property type="term" value="P:tetrahydrofolate interconversion"/>
    <property type="evidence" value="ECO:0007669"/>
    <property type="project" value="UniProtKB-UniRule"/>
</dbReference>
<dbReference type="CDD" id="cd01080">
    <property type="entry name" value="NAD_bind_m-THF_DH_Cyclohyd"/>
    <property type="match status" value="1"/>
</dbReference>
<dbReference type="FunFam" id="3.40.50.720:FF:000006">
    <property type="entry name" value="Bifunctional protein FolD"/>
    <property type="match status" value="1"/>
</dbReference>
<dbReference type="FunFam" id="3.40.50.10860:FF:000005">
    <property type="entry name" value="C-1-tetrahydrofolate synthase, cytoplasmic, putative"/>
    <property type="match status" value="1"/>
</dbReference>
<dbReference type="Gene3D" id="3.40.50.10860">
    <property type="entry name" value="Leucine Dehydrogenase, chain A, domain 1"/>
    <property type="match status" value="1"/>
</dbReference>
<dbReference type="Gene3D" id="3.40.50.720">
    <property type="entry name" value="NAD(P)-binding Rossmann-like Domain"/>
    <property type="match status" value="1"/>
</dbReference>
<dbReference type="HAMAP" id="MF_01576">
    <property type="entry name" value="THF_DHG_CYH"/>
    <property type="match status" value="1"/>
</dbReference>
<dbReference type="InterPro" id="IPR046346">
    <property type="entry name" value="Aminoacid_DH-like_N_sf"/>
</dbReference>
<dbReference type="InterPro" id="IPR036291">
    <property type="entry name" value="NAD(P)-bd_dom_sf"/>
</dbReference>
<dbReference type="InterPro" id="IPR000672">
    <property type="entry name" value="THF_DH/CycHdrlase"/>
</dbReference>
<dbReference type="InterPro" id="IPR020630">
    <property type="entry name" value="THF_DH/CycHdrlase_cat_dom"/>
</dbReference>
<dbReference type="InterPro" id="IPR020867">
    <property type="entry name" value="THF_DH/CycHdrlase_CS"/>
</dbReference>
<dbReference type="InterPro" id="IPR020631">
    <property type="entry name" value="THF_DH/CycHdrlase_NAD-bd_dom"/>
</dbReference>
<dbReference type="NCBIfam" id="NF010783">
    <property type="entry name" value="PRK14186.1"/>
    <property type="match status" value="1"/>
</dbReference>
<dbReference type="NCBIfam" id="NF010785">
    <property type="entry name" value="PRK14188.1"/>
    <property type="match status" value="1"/>
</dbReference>
<dbReference type="PANTHER" id="PTHR48099:SF5">
    <property type="entry name" value="C-1-TETRAHYDROFOLATE SYNTHASE, CYTOPLASMIC"/>
    <property type="match status" value="1"/>
</dbReference>
<dbReference type="PANTHER" id="PTHR48099">
    <property type="entry name" value="C-1-TETRAHYDROFOLATE SYNTHASE, CYTOPLASMIC-RELATED"/>
    <property type="match status" value="1"/>
</dbReference>
<dbReference type="Pfam" id="PF00763">
    <property type="entry name" value="THF_DHG_CYH"/>
    <property type="match status" value="1"/>
</dbReference>
<dbReference type="Pfam" id="PF02882">
    <property type="entry name" value="THF_DHG_CYH_C"/>
    <property type="match status" value="1"/>
</dbReference>
<dbReference type="PRINTS" id="PR00085">
    <property type="entry name" value="THFDHDRGNASE"/>
</dbReference>
<dbReference type="SUPFAM" id="SSF53223">
    <property type="entry name" value="Aminoacid dehydrogenase-like, N-terminal domain"/>
    <property type="match status" value="1"/>
</dbReference>
<dbReference type="SUPFAM" id="SSF51735">
    <property type="entry name" value="NAD(P)-binding Rossmann-fold domains"/>
    <property type="match status" value="1"/>
</dbReference>
<dbReference type="PROSITE" id="PS00766">
    <property type="entry name" value="THF_DHG_CYH_1"/>
    <property type="match status" value="1"/>
</dbReference>
<dbReference type="PROSITE" id="PS00767">
    <property type="entry name" value="THF_DHG_CYH_2"/>
    <property type="match status" value="1"/>
</dbReference>
<reference key="1">
    <citation type="journal article" date="2006" name="PLoS Genet.">
        <title>Comparative genomics of emerging human ehrlichiosis agents.</title>
        <authorList>
            <person name="Dunning Hotopp J.C."/>
            <person name="Lin M."/>
            <person name="Madupu R."/>
            <person name="Crabtree J."/>
            <person name="Angiuoli S.V."/>
            <person name="Eisen J.A."/>
            <person name="Seshadri R."/>
            <person name="Ren Q."/>
            <person name="Wu M."/>
            <person name="Utterback T.R."/>
            <person name="Smith S."/>
            <person name="Lewis M."/>
            <person name="Khouri H."/>
            <person name="Zhang C."/>
            <person name="Niu H."/>
            <person name="Lin Q."/>
            <person name="Ohashi N."/>
            <person name="Zhi N."/>
            <person name="Nelson W.C."/>
            <person name="Brinkac L.M."/>
            <person name="Dodson R.J."/>
            <person name="Rosovitz M.J."/>
            <person name="Sundaram J.P."/>
            <person name="Daugherty S.C."/>
            <person name="Davidsen T."/>
            <person name="Durkin A.S."/>
            <person name="Gwinn M.L."/>
            <person name="Haft D.H."/>
            <person name="Selengut J.D."/>
            <person name="Sullivan S.A."/>
            <person name="Zafar N."/>
            <person name="Zhou L."/>
            <person name="Benahmed F."/>
            <person name="Forberger H."/>
            <person name="Halpin R."/>
            <person name="Mulligan S."/>
            <person name="Robinson J."/>
            <person name="White O."/>
            <person name="Rikihisa Y."/>
            <person name="Tettelin H."/>
        </authorList>
    </citation>
    <scope>NUCLEOTIDE SEQUENCE [LARGE SCALE GENOMIC DNA]</scope>
    <source>
        <strain>HZ</strain>
    </source>
</reference>
<protein>
    <recommendedName>
        <fullName evidence="1">Bifunctional protein FolD</fullName>
    </recommendedName>
    <domain>
        <recommendedName>
            <fullName evidence="1">Methylenetetrahydrofolate dehydrogenase</fullName>
            <ecNumber evidence="1">1.5.1.5</ecNumber>
        </recommendedName>
    </domain>
    <domain>
        <recommendedName>
            <fullName evidence="1">Methenyltetrahydrofolate cyclohydrolase</fullName>
            <ecNumber evidence="1">3.5.4.9</ecNumber>
        </recommendedName>
    </domain>
</protein>
<sequence length="304" mass="32881">MGIYENNIIDGKAAAADLLGRLKVVMEGLKEEHGLFPSLVVIIVGDDPASRLYVGNKQRKAEELGINSKTIALPYETTQEELLGIIQELNEDENVHGILVQLPLPKHIDKILIINAIDPEKDVDGFHNANAGKLLTGEMDCMVPCTPQGCIYLIKKVMPVLSSKRAVVIGRSNIVGKPVALLLMYENCTVSILHSATANIEEHCRDAEIIIAAVGKARMVKSEWVSPGAVVIDVGINLITSESKNRFVGDVDFESVRDKVAAITPVPGGVGPMTIAFLLVNTVLGACRQKGIKQYKNIKSSVLQ</sequence>
<accession>Q2GLF2</accession>
<feature type="chain" id="PRO_0000268261" description="Bifunctional protein FolD">
    <location>
        <begin position="1"/>
        <end position="304"/>
    </location>
</feature>
<feature type="binding site" evidence="1">
    <location>
        <begin position="170"/>
        <end position="172"/>
    </location>
    <ligand>
        <name>NADP(+)</name>
        <dbReference type="ChEBI" id="CHEBI:58349"/>
    </ligand>
</feature>
<feature type="binding site" evidence="1">
    <location>
        <position position="195"/>
    </location>
    <ligand>
        <name>NADP(+)</name>
        <dbReference type="ChEBI" id="CHEBI:58349"/>
    </ligand>
</feature>
<feature type="binding site" evidence="1">
    <location>
        <position position="236"/>
    </location>
    <ligand>
        <name>NADP(+)</name>
        <dbReference type="ChEBI" id="CHEBI:58349"/>
    </ligand>
</feature>
<proteinExistence type="inferred from homology"/>
<organism>
    <name type="scientific">Anaplasma phagocytophilum (strain HZ)</name>
    <dbReference type="NCBI Taxonomy" id="212042"/>
    <lineage>
        <taxon>Bacteria</taxon>
        <taxon>Pseudomonadati</taxon>
        <taxon>Pseudomonadota</taxon>
        <taxon>Alphaproteobacteria</taxon>
        <taxon>Rickettsiales</taxon>
        <taxon>Anaplasmataceae</taxon>
        <taxon>Anaplasma</taxon>
        <taxon>phagocytophilum group</taxon>
    </lineage>
</organism>
<evidence type="ECO:0000255" key="1">
    <source>
        <dbReference type="HAMAP-Rule" id="MF_01576"/>
    </source>
</evidence>
<gene>
    <name evidence="1" type="primary">folD</name>
    <name type="ordered locus">APH_0175</name>
</gene>